<dbReference type="EMBL" id="X82071">
    <property type="protein sequence ID" value="CAA57572.1"/>
    <property type="status" value="ALT_INIT"/>
    <property type="molecule type" value="Genomic_DNA"/>
</dbReference>
<dbReference type="EMBL" id="AE004091">
    <property type="protein sequence ID" value="AAG08054.1"/>
    <property type="molecule type" value="Genomic_DNA"/>
</dbReference>
<dbReference type="PIR" id="D83063">
    <property type="entry name" value="D83063"/>
</dbReference>
<dbReference type="RefSeq" id="NP_253356.1">
    <property type="nucleotide sequence ID" value="NC_002516.2"/>
</dbReference>
<dbReference type="PDB" id="7RQF">
    <property type="method" value="X-ray"/>
    <property type="resolution" value="3.50 A"/>
    <property type="chains" value="A/B=65-590"/>
</dbReference>
<dbReference type="PDB" id="8SXE">
    <property type="method" value="EM"/>
    <property type="resolution" value="3.55 A"/>
    <property type="chains" value="C=46-590"/>
</dbReference>
<dbReference type="PDB" id="8SXF">
    <property type="method" value="EM"/>
    <property type="resolution" value="3.92 A"/>
    <property type="chains" value="C=46-590"/>
</dbReference>
<dbReference type="PDB" id="8SXG">
    <property type="method" value="EM"/>
    <property type="resolution" value="4.14 A"/>
    <property type="chains" value="C=46-590"/>
</dbReference>
<dbReference type="PDB" id="8SXH">
    <property type="method" value="EM"/>
    <property type="resolution" value="3.94 A"/>
    <property type="chains" value="C/G/K=46-590"/>
</dbReference>
<dbReference type="PDBsum" id="7RQF"/>
<dbReference type="PDBsum" id="8SXE"/>
<dbReference type="PDBsum" id="8SXF"/>
<dbReference type="PDBsum" id="8SXG"/>
<dbReference type="PDBsum" id="8SXH"/>
<dbReference type="EMDB" id="EMD-40846"/>
<dbReference type="EMDB" id="EMD-40847"/>
<dbReference type="EMDB" id="EMD-40848"/>
<dbReference type="EMDB" id="EMD-40849"/>
<dbReference type="EMDB" id="EMD-40850"/>
<dbReference type="EMDB" id="EMD-40851"/>
<dbReference type="EMDB" id="EMD-40852"/>
<dbReference type="SMR" id="P42810"/>
<dbReference type="STRING" id="208964.PA4667"/>
<dbReference type="PaxDb" id="208964-PA4667"/>
<dbReference type="GeneID" id="881370"/>
<dbReference type="KEGG" id="pae:PA4667"/>
<dbReference type="PATRIC" id="fig|208964.12.peg.4889"/>
<dbReference type="PseudoCAP" id="PA4667"/>
<dbReference type="HOGENOM" id="CLU_007251_4_0_6"/>
<dbReference type="InParanoid" id="P42810"/>
<dbReference type="OrthoDB" id="9766710at2"/>
<dbReference type="PhylomeDB" id="P42810"/>
<dbReference type="BioCyc" id="PAER208964:G1FZ6-4763-MONOMER"/>
<dbReference type="Proteomes" id="UP000002438">
    <property type="component" value="Chromosome"/>
</dbReference>
<dbReference type="Gene3D" id="1.25.40.10">
    <property type="entry name" value="Tetratricopeptide repeat domain"/>
    <property type="match status" value="4"/>
</dbReference>
<dbReference type="InterPro" id="IPR051012">
    <property type="entry name" value="CellSynth/LPSAsmb/PSIAsmb"/>
</dbReference>
<dbReference type="InterPro" id="IPR011990">
    <property type="entry name" value="TPR-like_helical_dom_sf"/>
</dbReference>
<dbReference type="InterPro" id="IPR019734">
    <property type="entry name" value="TPR_rpt"/>
</dbReference>
<dbReference type="PANTHER" id="PTHR45586:SF1">
    <property type="entry name" value="LIPOPOLYSACCHARIDE ASSEMBLY PROTEIN B"/>
    <property type="match status" value="1"/>
</dbReference>
<dbReference type="PANTHER" id="PTHR45586">
    <property type="entry name" value="TPR REPEAT-CONTAINING PROTEIN PA4667"/>
    <property type="match status" value="1"/>
</dbReference>
<dbReference type="Pfam" id="PF13432">
    <property type="entry name" value="TPR_16"/>
    <property type="match status" value="4"/>
</dbReference>
<dbReference type="Pfam" id="PF14559">
    <property type="entry name" value="TPR_19"/>
    <property type="match status" value="1"/>
</dbReference>
<dbReference type="SMART" id="SM00028">
    <property type="entry name" value="TPR"/>
    <property type="match status" value="7"/>
</dbReference>
<dbReference type="SUPFAM" id="SSF48452">
    <property type="entry name" value="TPR-like"/>
    <property type="match status" value="2"/>
</dbReference>
<dbReference type="PROSITE" id="PS50005">
    <property type="entry name" value="TPR"/>
    <property type="match status" value="5"/>
</dbReference>
<dbReference type="PROSITE" id="PS50293">
    <property type="entry name" value="TPR_REGION"/>
    <property type="match status" value="1"/>
</dbReference>
<organism>
    <name type="scientific">Pseudomonas aeruginosa (strain ATCC 15692 / DSM 22644 / CIP 104116 / JCM 14847 / LMG 12228 / 1C / PRS 101 / PAO1)</name>
    <dbReference type="NCBI Taxonomy" id="208964"/>
    <lineage>
        <taxon>Bacteria</taxon>
        <taxon>Pseudomonadati</taxon>
        <taxon>Pseudomonadota</taxon>
        <taxon>Gammaproteobacteria</taxon>
        <taxon>Pseudomonadales</taxon>
        <taxon>Pseudomonadaceae</taxon>
        <taxon>Pseudomonas</taxon>
    </lineage>
</organism>
<accession>P42810</accession>
<accession>Q9HVC6</accession>
<keyword id="KW-0002">3D-structure</keyword>
<keyword id="KW-1185">Reference proteome</keyword>
<keyword id="KW-0677">Repeat</keyword>
<keyword id="KW-0802">TPR repeat</keyword>
<gene>
    <name type="ordered locus">PA4667</name>
</gene>
<evidence type="ECO:0000305" key="1"/>
<evidence type="ECO:0007829" key="2">
    <source>
        <dbReference type="PDB" id="7RQF"/>
    </source>
</evidence>
<reference key="1">
    <citation type="journal article" date="1995" name="J. Bacteriol.">
        <title>Regulation of the hemA gene during 5-aminolevulinic acid formation in Pseudomonas aeruginosa.</title>
        <authorList>
            <person name="Hungerer C."/>
            <person name="Troup B."/>
            <person name="Roemling U."/>
            <person name="Jahn D."/>
        </authorList>
    </citation>
    <scope>NUCLEOTIDE SEQUENCE [GENOMIC DNA]</scope>
    <source>
        <strain>ATCC 15692 / DSM 22644 / CIP 104116 / JCM 14847 / LMG 12228 / 1C / PRS 101 / PAO1</strain>
    </source>
</reference>
<reference key="2">
    <citation type="journal article" date="2000" name="Nature">
        <title>Complete genome sequence of Pseudomonas aeruginosa PAO1, an opportunistic pathogen.</title>
        <authorList>
            <person name="Stover C.K."/>
            <person name="Pham X.-Q.T."/>
            <person name="Erwin A.L."/>
            <person name="Mizoguchi S.D."/>
            <person name="Warrener P."/>
            <person name="Hickey M.J."/>
            <person name="Brinkman F.S.L."/>
            <person name="Hufnagle W.O."/>
            <person name="Kowalik D.J."/>
            <person name="Lagrou M."/>
            <person name="Garber R.L."/>
            <person name="Goltry L."/>
            <person name="Tolentino E."/>
            <person name="Westbrock-Wadman S."/>
            <person name="Yuan Y."/>
            <person name="Brody L.L."/>
            <person name="Coulter S.N."/>
            <person name="Folger K.R."/>
            <person name="Kas A."/>
            <person name="Larbig K."/>
            <person name="Lim R.M."/>
            <person name="Smith K.A."/>
            <person name="Spencer D.H."/>
            <person name="Wong G.K.-S."/>
            <person name="Wu Z."/>
            <person name="Paulsen I.T."/>
            <person name="Reizer J."/>
            <person name="Saier M.H. Jr."/>
            <person name="Hancock R.E.W."/>
            <person name="Lory S."/>
            <person name="Olson M.V."/>
        </authorList>
    </citation>
    <scope>NUCLEOTIDE SEQUENCE [LARGE SCALE GENOMIC DNA]</scope>
    <source>
        <strain>ATCC 15692 / DSM 22644 / CIP 104116 / JCM 14847 / LMG 12228 / 1C / PRS 101 / PAO1</strain>
    </source>
</reference>
<name>Y4667_PSEAE</name>
<sequence length="590" mass="66291">MMAPPSQVQGRLSSSMNKSLALLTVTLLLGGCQSLIHKTPDGTPPVEDTAVETKAKPEKYGSFSEDSLYSLLVAELAGQRNRFDIALSNYVVQAQKTRDPGVSERAFRIAEYLGADQEALDTSLLWARSAPDNLDAQRAAAIQLARAGRYEESMVYMEKVLNGQGDTHFDFLALSAAETDPDTRAGLLQSFDHLLKKYPNNGQLLFGKALLLQQDGRPDEALTLLEDNSASRHEVAPLLLRSRLLQSMKRSDEALPLLKAGIKEHPDDKRVRLAYARLLVEQNRLDDAKAEFAGLVQQFPDDDDLRFSLALVCLEAQAWDEARIYLEELVERDSHVDAAHFNLGRLAEEQKDTARALDEYAQVGPGNDFLPAQLRQTDVLLKAGRVDEAAQRLDKARSEQPDYAIQLYLIEAEALSNNDQQEKAWQAIQEGLKQYPEDLNLLYTRSMLAEKRNDLAQMEKDLRFVIAREPDNAMALNALGYTLADRTTRYGEARELILKAHKLNPDDPAILDSMGWINYRQGKLADAERYLRQALQRYPDHEVAAHLGEVLWAQGRQGDARAIWREYLDKQPDSDVLRRTIKRLTGAETP</sequence>
<comment type="sequence caution" evidence="1">
    <conflict type="erroneous initiation">
        <sequence resource="EMBL-CDS" id="CAA57572"/>
    </conflict>
</comment>
<proteinExistence type="evidence at protein level"/>
<protein>
    <recommendedName>
        <fullName>TPR repeat-containing protein PA4667</fullName>
    </recommendedName>
</protein>
<feature type="chain" id="PRO_0000206256" description="TPR repeat-containing protein PA4667">
    <location>
        <begin position="1"/>
        <end position="590"/>
    </location>
</feature>
<feature type="repeat" description="TPR 1">
    <location>
        <begin position="235"/>
        <end position="268"/>
    </location>
</feature>
<feature type="repeat" description="TPR 2">
    <location>
        <begin position="269"/>
        <end position="302"/>
    </location>
</feature>
<feature type="repeat" description="TPR 3">
    <location>
        <begin position="370"/>
        <end position="403"/>
    </location>
</feature>
<feature type="repeat" description="TPR 4">
    <location>
        <begin position="405"/>
        <end position="438"/>
    </location>
</feature>
<feature type="repeat" description="TPR 5">
    <location>
        <begin position="508"/>
        <end position="541"/>
    </location>
</feature>
<feature type="sequence conflict" description="In Ref. 1; CAA57572." evidence="1" ref="1">
    <original>D</original>
    <variation>DD</variation>
    <location>
        <position position="304"/>
    </location>
</feature>
<feature type="helix" evidence="2">
    <location>
        <begin position="68"/>
        <end position="95"/>
    </location>
</feature>
<feature type="helix" evidence="2">
    <location>
        <begin position="103"/>
        <end position="114"/>
    </location>
</feature>
<feature type="strand" evidence="2">
    <location>
        <begin position="116"/>
        <end position="119"/>
    </location>
</feature>
<feature type="helix" evidence="2">
    <location>
        <begin position="122"/>
        <end position="128"/>
    </location>
</feature>
<feature type="helix" evidence="2">
    <location>
        <begin position="131"/>
        <end position="133"/>
    </location>
</feature>
<feature type="helix" evidence="2">
    <location>
        <begin position="138"/>
        <end position="161"/>
    </location>
</feature>
<feature type="helix" evidence="2">
    <location>
        <begin position="171"/>
        <end position="178"/>
    </location>
</feature>
<feature type="helix" evidence="2">
    <location>
        <begin position="184"/>
        <end position="197"/>
    </location>
</feature>
<feature type="helix" evidence="2">
    <location>
        <begin position="202"/>
        <end position="214"/>
    </location>
</feature>
<feature type="helix" evidence="2">
    <location>
        <begin position="218"/>
        <end position="227"/>
    </location>
</feature>
<feature type="helix" evidence="2">
    <location>
        <begin position="230"/>
        <end position="233"/>
    </location>
</feature>
<feature type="helix" evidence="2">
    <location>
        <begin position="235"/>
        <end position="247"/>
    </location>
</feature>
<feature type="helix" evidence="2">
    <location>
        <begin position="251"/>
        <end position="253"/>
    </location>
</feature>
<feature type="helix" evidence="2">
    <location>
        <begin position="254"/>
        <end position="264"/>
    </location>
</feature>
<feature type="helix" evidence="2">
    <location>
        <begin position="269"/>
        <end position="281"/>
    </location>
</feature>
<feature type="helix" evidence="2">
    <location>
        <begin position="286"/>
        <end position="298"/>
    </location>
</feature>
<feature type="helix" evidence="2">
    <location>
        <begin position="303"/>
        <end position="315"/>
    </location>
</feature>
<feature type="helix" evidence="2">
    <location>
        <begin position="319"/>
        <end position="332"/>
    </location>
</feature>
<feature type="helix" evidence="2">
    <location>
        <begin position="336"/>
        <end position="349"/>
    </location>
</feature>
<feature type="helix" evidence="2">
    <location>
        <begin position="353"/>
        <end position="361"/>
    </location>
</feature>
<feature type="helix" evidence="2">
    <location>
        <begin position="369"/>
        <end position="383"/>
    </location>
</feature>
<feature type="helix" evidence="2">
    <location>
        <begin position="386"/>
        <end position="399"/>
    </location>
</feature>
<feature type="helix" evidence="2">
    <location>
        <begin position="404"/>
        <end position="417"/>
    </location>
</feature>
<feature type="helix" evidence="2">
    <location>
        <begin position="421"/>
        <end position="434"/>
    </location>
</feature>
<feature type="helix" evidence="2">
    <location>
        <begin position="439"/>
        <end position="451"/>
    </location>
</feature>
<feature type="helix" evidence="2">
    <location>
        <begin position="455"/>
        <end position="468"/>
    </location>
</feature>
<feature type="helix" evidence="2">
    <location>
        <begin position="473"/>
        <end position="485"/>
    </location>
</feature>
<feature type="helix" evidence="2">
    <location>
        <begin position="490"/>
        <end position="503"/>
    </location>
</feature>
<feature type="helix" evidence="2">
    <location>
        <begin position="508"/>
        <end position="521"/>
    </location>
</feature>
<feature type="helix" evidence="2">
    <location>
        <begin position="524"/>
        <end position="537"/>
    </location>
</feature>
<feature type="helix" evidence="2">
    <location>
        <begin position="541"/>
        <end position="554"/>
    </location>
</feature>
<feature type="helix" evidence="2">
    <location>
        <begin position="557"/>
        <end position="568"/>
    </location>
</feature>
<feature type="helix" evidence="2">
    <location>
        <begin position="572"/>
        <end position="574"/>
    </location>
</feature>
<feature type="helix" evidence="2">
    <location>
        <begin position="575"/>
        <end position="585"/>
    </location>
</feature>